<name>RNPH_RHOPA</name>
<gene>
    <name evidence="1" type="primary">rph</name>
    <name type="ordered locus">RPA0329</name>
</gene>
<sequence>MRPSRRAPDELRAVSLERGVVKYAEGSCLVKFGDTHVLVTATLEERLPPWLKGQGRGWVTAEYGMLPRATLERTRREASAGKQNGRTVEIQRLIGRSLRTIVDLEALGERQITVDCDVLQADGGTRTASITGAWVALADCLNWMKARNMIKGQVLRDNVAAISCGIYNGTPVLDLDYAEDSEAETDANFVMTGDGRLVEVQGTAERTPFSQDEFLQLMALAQKGVARLVDLQKMAVG</sequence>
<accession>Q6NCY8</accession>
<comment type="function">
    <text evidence="1">Phosphorolytic 3'-5' exoribonuclease that plays an important role in tRNA 3'-end maturation. Removes nucleotide residues following the 3'-CCA terminus of tRNAs; can also add nucleotides to the ends of RNA molecules by using nucleoside diphosphates as substrates, but this may not be physiologically important. Probably plays a role in initiation of 16S rRNA degradation (leading to ribosome degradation) during starvation.</text>
</comment>
<comment type="catalytic activity">
    <reaction evidence="1">
        <text>tRNA(n+1) + phosphate = tRNA(n) + a ribonucleoside 5'-diphosphate</text>
        <dbReference type="Rhea" id="RHEA:10628"/>
        <dbReference type="Rhea" id="RHEA-COMP:17343"/>
        <dbReference type="Rhea" id="RHEA-COMP:17344"/>
        <dbReference type="ChEBI" id="CHEBI:43474"/>
        <dbReference type="ChEBI" id="CHEBI:57930"/>
        <dbReference type="ChEBI" id="CHEBI:173114"/>
        <dbReference type="EC" id="2.7.7.56"/>
    </reaction>
</comment>
<comment type="subunit">
    <text evidence="1">Homohexameric ring arranged as a trimer of dimers.</text>
</comment>
<comment type="similarity">
    <text evidence="1">Belongs to the RNase PH family.</text>
</comment>
<proteinExistence type="inferred from homology"/>
<dbReference type="EC" id="2.7.7.56" evidence="1"/>
<dbReference type="EMBL" id="BX572594">
    <property type="protein sequence ID" value="CAE25773.1"/>
    <property type="molecule type" value="Genomic_DNA"/>
</dbReference>
<dbReference type="RefSeq" id="WP_011155897.1">
    <property type="nucleotide sequence ID" value="NZ_CP116810.1"/>
</dbReference>
<dbReference type="SMR" id="Q6NCY8"/>
<dbReference type="STRING" id="258594.RPA0329"/>
<dbReference type="GeneID" id="66891340"/>
<dbReference type="eggNOG" id="COG0689">
    <property type="taxonomic scope" value="Bacteria"/>
</dbReference>
<dbReference type="HOGENOM" id="CLU_050858_0_0_5"/>
<dbReference type="PhylomeDB" id="Q6NCY8"/>
<dbReference type="GO" id="GO:0000175">
    <property type="term" value="F:3'-5'-RNA exonuclease activity"/>
    <property type="evidence" value="ECO:0007669"/>
    <property type="project" value="UniProtKB-UniRule"/>
</dbReference>
<dbReference type="GO" id="GO:0000049">
    <property type="term" value="F:tRNA binding"/>
    <property type="evidence" value="ECO:0007669"/>
    <property type="project" value="UniProtKB-UniRule"/>
</dbReference>
<dbReference type="GO" id="GO:0009022">
    <property type="term" value="F:tRNA nucleotidyltransferase activity"/>
    <property type="evidence" value="ECO:0007669"/>
    <property type="project" value="UniProtKB-UniRule"/>
</dbReference>
<dbReference type="GO" id="GO:0016075">
    <property type="term" value="P:rRNA catabolic process"/>
    <property type="evidence" value="ECO:0007669"/>
    <property type="project" value="UniProtKB-UniRule"/>
</dbReference>
<dbReference type="GO" id="GO:0006364">
    <property type="term" value="P:rRNA processing"/>
    <property type="evidence" value="ECO:0007669"/>
    <property type="project" value="UniProtKB-KW"/>
</dbReference>
<dbReference type="GO" id="GO:0008033">
    <property type="term" value="P:tRNA processing"/>
    <property type="evidence" value="ECO:0007669"/>
    <property type="project" value="UniProtKB-UniRule"/>
</dbReference>
<dbReference type="CDD" id="cd11362">
    <property type="entry name" value="RNase_PH_bact"/>
    <property type="match status" value="1"/>
</dbReference>
<dbReference type="FunFam" id="3.30.230.70:FF:000003">
    <property type="entry name" value="Ribonuclease PH"/>
    <property type="match status" value="1"/>
</dbReference>
<dbReference type="Gene3D" id="3.30.230.70">
    <property type="entry name" value="GHMP Kinase, N-terminal domain"/>
    <property type="match status" value="1"/>
</dbReference>
<dbReference type="HAMAP" id="MF_00564">
    <property type="entry name" value="RNase_PH"/>
    <property type="match status" value="1"/>
</dbReference>
<dbReference type="InterPro" id="IPR001247">
    <property type="entry name" value="ExoRNase_PH_dom1"/>
</dbReference>
<dbReference type="InterPro" id="IPR015847">
    <property type="entry name" value="ExoRNase_PH_dom2"/>
</dbReference>
<dbReference type="InterPro" id="IPR036345">
    <property type="entry name" value="ExoRNase_PH_dom2_sf"/>
</dbReference>
<dbReference type="InterPro" id="IPR027408">
    <property type="entry name" value="PNPase/RNase_PH_dom_sf"/>
</dbReference>
<dbReference type="InterPro" id="IPR020568">
    <property type="entry name" value="Ribosomal_Su5_D2-typ_SF"/>
</dbReference>
<dbReference type="InterPro" id="IPR050080">
    <property type="entry name" value="RNase_PH"/>
</dbReference>
<dbReference type="InterPro" id="IPR002381">
    <property type="entry name" value="RNase_PH_bac-type"/>
</dbReference>
<dbReference type="InterPro" id="IPR018336">
    <property type="entry name" value="RNase_PH_CS"/>
</dbReference>
<dbReference type="NCBIfam" id="TIGR01966">
    <property type="entry name" value="RNasePH"/>
    <property type="match status" value="1"/>
</dbReference>
<dbReference type="PANTHER" id="PTHR11953">
    <property type="entry name" value="EXOSOME COMPLEX COMPONENT"/>
    <property type="match status" value="1"/>
</dbReference>
<dbReference type="PANTHER" id="PTHR11953:SF0">
    <property type="entry name" value="EXOSOME COMPLEX COMPONENT RRP41"/>
    <property type="match status" value="1"/>
</dbReference>
<dbReference type="Pfam" id="PF01138">
    <property type="entry name" value="RNase_PH"/>
    <property type="match status" value="1"/>
</dbReference>
<dbReference type="Pfam" id="PF03725">
    <property type="entry name" value="RNase_PH_C"/>
    <property type="match status" value="1"/>
</dbReference>
<dbReference type="SUPFAM" id="SSF55666">
    <property type="entry name" value="Ribonuclease PH domain 2-like"/>
    <property type="match status" value="1"/>
</dbReference>
<dbReference type="SUPFAM" id="SSF54211">
    <property type="entry name" value="Ribosomal protein S5 domain 2-like"/>
    <property type="match status" value="1"/>
</dbReference>
<dbReference type="PROSITE" id="PS01277">
    <property type="entry name" value="RIBONUCLEASE_PH"/>
    <property type="match status" value="1"/>
</dbReference>
<reference key="1">
    <citation type="journal article" date="2004" name="Nat. Biotechnol.">
        <title>Complete genome sequence of the metabolically versatile photosynthetic bacterium Rhodopseudomonas palustris.</title>
        <authorList>
            <person name="Larimer F.W."/>
            <person name="Chain P."/>
            <person name="Hauser L."/>
            <person name="Lamerdin J.E."/>
            <person name="Malfatti S."/>
            <person name="Do L."/>
            <person name="Land M.L."/>
            <person name="Pelletier D.A."/>
            <person name="Beatty J.T."/>
            <person name="Lang A.S."/>
            <person name="Tabita F.R."/>
            <person name="Gibson J.L."/>
            <person name="Hanson T.E."/>
            <person name="Bobst C."/>
            <person name="Torres y Torres J.L."/>
            <person name="Peres C."/>
            <person name="Harrison F.H."/>
            <person name="Gibson J."/>
            <person name="Harwood C.S."/>
        </authorList>
    </citation>
    <scope>NUCLEOTIDE SEQUENCE [LARGE SCALE GENOMIC DNA]</scope>
    <source>
        <strain>ATCC BAA-98 / CGA009</strain>
    </source>
</reference>
<feature type="chain" id="PRO_0000139931" description="Ribonuclease PH">
    <location>
        <begin position="1"/>
        <end position="237"/>
    </location>
</feature>
<feature type="binding site" evidence="1">
    <location>
        <position position="86"/>
    </location>
    <ligand>
        <name>phosphate</name>
        <dbReference type="ChEBI" id="CHEBI:43474"/>
        <note>substrate</note>
    </ligand>
</feature>
<feature type="binding site" evidence="1">
    <location>
        <begin position="124"/>
        <end position="126"/>
    </location>
    <ligand>
        <name>phosphate</name>
        <dbReference type="ChEBI" id="CHEBI:43474"/>
        <note>substrate</note>
    </ligand>
</feature>
<organism>
    <name type="scientific">Rhodopseudomonas palustris (strain ATCC BAA-98 / CGA009)</name>
    <dbReference type="NCBI Taxonomy" id="258594"/>
    <lineage>
        <taxon>Bacteria</taxon>
        <taxon>Pseudomonadati</taxon>
        <taxon>Pseudomonadota</taxon>
        <taxon>Alphaproteobacteria</taxon>
        <taxon>Hyphomicrobiales</taxon>
        <taxon>Nitrobacteraceae</taxon>
        <taxon>Rhodopseudomonas</taxon>
    </lineage>
</organism>
<keyword id="KW-0548">Nucleotidyltransferase</keyword>
<keyword id="KW-0694">RNA-binding</keyword>
<keyword id="KW-0698">rRNA processing</keyword>
<keyword id="KW-0808">Transferase</keyword>
<keyword id="KW-0819">tRNA processing</keyword>
<keyword id="KW-0820">tRNA-binding</keyword>
<protein>
    <recommendedName>
        <fullName evidence="1">Ribonuclease PH</fullName>
        <shortName evidence="1">RNase PH</shortName>
        <ecNumber evidence="1">2.7.7.56</ecNumber>
    </recommendedName>
    <alternativeName>
        <fullName evidence="1">tRNA nucleotidyltransferase</fullName>
    </alternativeName>
</protein>
<evidence type="ECO:0000255" key="1">
    <source>
        <dbReference type="HAMAP-Rule" id="MF_00564"/>
    </source>
</evidence>